<reference key="1">
    <citation type="journal article" date="1999" name="Nature">
        <title>Sequence and analysis of chromosome 4 of the plant Arabidopsis thaliana.</title>
        <authorList>
            <person name="Mayer K.F.X."/>
            <person name="Schueller C."/>
            <person name="Wambutt R."/>
            <person name="Murphy G."/>
            <person name="Volckaert G."/>
            <person name="Pohl T."/>
            <person name="Duesterhoeft A."/>
            <person name="Stiekema W."/>
            <person name="Entian K.-D."/>
            <person name="Terryn N."/>
            <person name="Harris B."/>
            <person name="Ansorge W."/>
            <person name="Brandt P."/>
            <person name="Grivell L.A."/>
            <person name="Rieger M."/>
            <person name="Weichselgartner M."/>
            <person name="de Simone V."/>
            <person name="Obermaier B."/>
            <person name="Mache R."/>
            <person name="Mueller M."/>
            <person name="Kreis M."/>
            <person name="Delseny M."/>
            <person name="Puigdomenech P."/>
            <person name="Watson M."/>
            <person name="Schmidtheini T."/>
            <person name="Reichert B."/>
            <person name="Portetelle D."/>
            <person name="Perez-Alonso M."/>
            <person name="Boutry M."/>
            <person name="Bancroft I."/>
            <person name="Vos P."/>
            <person name="Hoheisel J."/>
            <person name="Zimmermann W."/>
            <person name="Wedler H."/>
            <person name="Ridley P."/>
            <person name="Langham S.-A."/>
            <person name="McCullagh B."/>
            <person name="Bilham L."/>
            <person name="Robben J."/>
            <person name="van der Schueren J."/>
            <person name="Grymonprez B."/>
            <person name="Chuang Y.-J."/>
            <person name="Vandenbussche F."/>
            <person name="Braeken M."/>
            <person name="Weltjens I."/>
            <person name="Voet M."/>
            <person name="Bastiaens I."/>
            <person name="Aert R."/>
            <person name="Defoor E."/>
            <person name="Weitzenegger T."/>
            <person name="Bothe G."/>
            <person name="Ramsperger U."/>
            <person name="Hilbert H."/>
            <person name="Braun M."/>
            <person name="Holzer E."/>
            <person name="Brandt A."/>
            <person name="Peters S."/>
            <person name="van Staveren M."/>
            <person name="Dirkse W."/>
            <person name="Mooijman P."/>
            <person name="Klein Lankhorst R."/>
            <person name="Rose M."/>
            <person name="Hauf J."/>
            <person name="Koetter P."/>
            <person name="Berneiser S."/>
            <person name="Hempel S."/>
            <person name="Feldpausch M."/>
            <person name="Lamberth S."/>
            <person name="Van den Daele H."/>
            <person name="De Keyser A."/>
            <person name="Buysshaert C."/>
            <person name="Gielen J."/>
            <person name="Villarroel R."/>
            <person name="De Clercq R."/>
            <person name="van Montagu M."/>
            <person name="Rogers J."/>
            <person name="Cronin A."/>
            <person name="Quail M.A."/>
            <person name="Bray-Allen S."/>
            <person name="Clark L."/>
            <person name="Doggett J."/>
            <person name="Hall S."/>
            <person name="Kay M."/>
            <person name="Lennard N."/>
            <person name="McLay K."/>
            <person name="Mayes R."/>
            <person name="Pettett A."/>
            <person name="Rajandream M.A."/>
            <person name="Lyne M."/>
            <person name="Benes V."/>
            <person name="Rechmann S."/>
            <person name="Borkova D."/>
            <person name="Bloecker H."/>
            <person name="Scharfe M."/>
            <person name="Grimm M."/>
            <person name="Loehnert T.-H."/>
            <person name="Dose S."/>
            <person name="de Haan M."/>
            <person name="Maarse A.C."/>
            <person name="Schaefer M."/>
            <person name="Mueller-Auer S."/>
            <person name="Gabel C."/>
            <person name="Fuchs M."/>
            <person name="Fartmann B."/>
            <person name="Granderath K."/>
            <person name="Dauner D."/>
            <person name="Herzl A."/>
            <person name="Neumann S."/>
            <person name="Argiriou A."/>
            <person name="Vitale D."/>
            <person name="Liguori R."/>
            <person name="Piravandi E."/>
            <person name="Massenet O."/>
            <person name="Quigley F."/>
            <person name="Clabauld G."/>
            <person name="Muendlein A."/>
            <person name="Felber R."/>
            <person name="Schnabl S."/>
            <person name="Hiller R."/>
            <person name="Schmidt W."/>
            <person name="Lecharny A."/>
            <person name="Aubourg S."/>
            <person name="Chefdor F."/>
            <person name="Cooke R."/>
            <person name="Berger C."/>
            <person name="Monfort A."/>
            <person name="Casacuberta E."/>
            <person name="Gibbons T."/>
            <person name="Weber N."/>
            <person name="Vandenbol M."/>
            <person name="Bargues M."/>
            <person name="Terol J."/>
            <person name="Torres A."/>
            <person name="Perez-Perez A."/>
            <person name="Purnelle B."/>
            <person name="Bent E."/>
            <person name="Johnson S."/>
            <person name="Tacon D."/>
            <person name="Jesse T."/>
            <person name="Heijnen L."/>
            <person name="Schwarz S."/>
            <person name="Scholler P."/>
            <person name="Heber S."/>
            <person name="Francs P."/>
            <person name="Bielke C."/>
            <person name="Frishman D."/>
            <person name="Haase D."/>
            <person name="Lemcke K."/>
            <person name="Mewes H.-W."/>
            <person name="Stocker S."/>
            <person name="Zaccaria P."/>
            <person name="Bevan M."/>
            <person name="Wilson R.K."/>
            <person name="de la Bastide M."/>
            <person name="Habermann K."/>
            <person name="Parnell L."/>
            <person name="Dedhia N."/>
            <person name="Gnoj L."/>
            <person name="Schutz K."/>
            <person name="Huang E."/>
            <person name="Spiegel L."/>
            <person name="Sekhon M."/>
            <person name="Murray J."/>
            <person name="Sheet P."/>
            <person name="Cordes M."/>
            <person name="Abu-Threideh J."/>
            <person name="Stoneking T."/>
            <person name="Kalicki J."/>
            <person name="Graves T."/>
            <person name="Harmon G."/>
            <person name="Edwards J."/>
            <person name="Latreille P."/>
            <person name="Courtney L."/>
            <person name="Cloud J."/>
            <person name="Abbott A."/>
            <person name="Scott K."/>
            <person name="Johnson D."/>
            <person name="Minx P."/>
            <person name="Bentley D."/>
            <person name="Fulton B."/>
            <person name="Miller N."/>
            <person name="Greco T."/>
            <person name="Kemp K."/>
            <person name="Kramer J."/>
            <person name="Fulton L."/>
            <person name="Mardis E."/>
            <person name="Dante M."/>
            <person name="Pepin K."/>
            <person name="Hillier L.W."/>
            <person name="Nelson J."/>
            <person name="Spieth J."/>
            <person name="Ryan E."/>
            <person name="Andrews S."/>
            <person name="Geisel C."/>
            <person name="Layman D."/>
            <person name="Du H."/>
            <person name="Ali J."/>
            <person name="Berghoff A."/>
            <person name="Jones K."/>
            <person name="Drone K."/>
            <person name="Cotton M."/>
            <person name="Joshu C."/>
            <person name="Antonoiu B."/>
            <person name="Zidanic M."/>
            <person name="Strong C."/>
            <person name="Sun H."/>
            <person name="Lamar B."/>
            <person name="Yordan C."/>
            <person name="Ma P."/>
            <person name="Zhong J."/>
            <person name="Preston R."/>
            <person name="Vil D."/>
            <person name="Shekher M."/>
            <person name="Matero A."/>
            <person name="Shah R."/>
            <person name="Swaby I.K."/>
            <person name="O'Shaughnessy A."/>
            <person name="Rodriguez M."/>
            <person name="Hoffman J."/>
            <person name="Till S."/>
            <person name="Granat S."/>
            <person name="Shohdy N."/>
            <person name="Hasegawa A."/>
            <person name="Hameed A."/>
            <person name="Lodhi M."/>
            <person name="Johnson A."/>
            <person name="Chen E."/>
            <person name="Marra M.A."/>
            <person name="Martienssen R."/>
            <person name="McCombie W.R."/>
        </authorList>
    </citation>
    <scope>NUCLEOTIDE SEQUENCE [LARGE SCALE GENOMIC DNA]</scope>
    <source>
        <strain>cv. Columbia</strain>
    </source>
</reference>
<reference key="2">
    <citation type="journal article" date="2017" name="Plant J.">
        <title>Araport11: a complete reannotation of the Arabidopsis thaliana reference genome.</title>
        <authorList>
            <person name="Cheng C.Y."/>
            <person name="Krishnakumar V."/>
            <person name="Chan A.P."/>
            <person name="Thibaud-Nissen F."/>
            <person name="Schobel S."/>
            <person name="Town C.D."/>
        </authorList>
    </citation>
    <scope>GENOME REANNOTATION</scope>
    <source>
        <strain>cv. Columbia</strain>
    </source>
</reference>
<reference key="3">
    <citation type="submission" date="2008-10" db="EMBL/GenBank/DDBJ databases">
        <title>Arabidopsis ORF clones.</title>
        <authorList>
            <person name="De Los Reyes C."/>
            <person name="Quan R."/>
            <person name="Chen H."/>
            <person name="Bautista V."/>
            <person name="Kim C.J."/>
            <person name="Ecker J.R."/>
        </authorList>
    </citation>
    <scope>NUCLEOTIDE SEQUENCE [LARGE SCALE MRNA]</scope>
    <source>
        <strain>cv. Columbia</strain>
    </source>
</reference>
<comment type="function">
    <text evidence="1">N-acetylglutamate synthase involved in arginine biosynthesis.</text>
</comment>
<comment type="catalytic activity">
    <reaction>
        <text>L-glutamate + acetyl-CoA = N-acetyl-L-glutamate + CoA + H(+)</text>
        <dbReference type="Rhea" id="RHEA:24292"/>
        <dbReference type="ChEBI" id="CHEBI:15378"/>
        <dbReference type="ChEBI" id="CHEBI:29985"/>
        <dbReference type="ChEBI" id="CHEBI:44337"/>
        <dbReference type="ChEBI" id="CHEBI:57287"/>
        <dbReference type="ChEBI" id="CHEBI:57288"/>
        <dbReference type="EC" id="2.3.1.1"/>
    </reaction>
</comment>
<comment type="pathway">
    <text>Amino-acid biosynthesis; L-arginine biosynthesis; N(2)-acetyl-L-ornithine from L-glutamate: step 1/4.</text>
</comment>
<comment type="interaction">
    <interactant intactId="EBI-15197867">
        <id>B5X4Z4</id>
    </interactant>
    <interactant intactId="EBI-395803">
        <id>Q9XGN1</id>
        <label>TTG1</label>
    </interactant>
    <organismsDiffer>false</organismsDiffer>
    <experiments>3</experiments>
</comment>
<comment type="subcellular location">
    <subcellularLocation>
        <location evidence="3">Plastid</location>
        <location evidence="3">Chloroplast</location>
    </subcellularLocation>
</comment>
<comment type="alternative products">
    <event type="alternative splicing"/>
    <isoform>
        <id>B5X4Z4-1</id>
        <name>1</name>
        <sequence type="displayed"/>
    </isoform>
    <text>A number of isoforms are produced. According to EST sequences.</text>
</comment>
<comment type="similarity">
    <text evidence="3">Belongs to the acetyltransferase family. ArgA subfamily.</text>
</comment>
<accession>B5X4Z4</accession>
<sequence>MERGALVGSSSTSSYYVPYHFRQSKSNFSSFKPKNKLNPTQFRFNCSWFKPVSSITAAKCNMFDYAVTAAGDVEAEHPVDDKQFVRWFREAWPYLWAHRGCTFVVIISGEIIAGSSCDAILKDIAFLHHLGIRFVLVPGTQEQIDQLLAERGREATYVGRYRVTDAASLQAAKEAAGAISVMLEAKLSPGPSICNIRRHGDRSRLHDIGVRVDTGNFFAAKRRGVVDGVDFGATGEVKKIDVDRICERLDGGSVVLLRNLGHSSSGEVLNCNTYEVATACALAIGADKLICIMDGPILDESGHLIHFLTLQEADMLVRKRAQQSDIAANYVKAVGDGSMAYPEPPNNTNGNITSAQNGRAVSFWGNGNHTPIFQNGVGFDNGNGLWPCEQGFAIGGEERLSRLNGYLSELAAAAFVCRGGVKRVHLLDGTISGVLLLELFKRDGMGTMVASDVYEGTRDARVEDLAGIRHIIKPLEESGILVRRTDEELLRALDSFVVVEREGQIIACAALFPFFKDKCGEVAAIAVASDCRGQGQGDKLLDYIEKKASSLGLEKLFLLTTRTADWFVRRGFQECSIEIIPESRRQRINLSRNSKYYMKKLIPDRSGISVMRI</sequence>
<proteinExistence type="evidence at protein level"/>
<dbReference type="EC" id="2.3.1.1"/>
<dbReference type="EMBL" id="AL035605">
    <property type="status" value="NOT_ANNOTATED_CDS"/>
    <property type="molecule type" value="Genomic_DNA"/>
</dbReference>
<dbReference type="EMBL" id="CP002687">
    <property type="protein sequence ID" value="AEE86822.1"/>
    <property type="molecule type" value="Genomic_DNA"/>
</dbReference>
<dbReference type="EMBL" id="BT046113">
    <property type="protein sequence ID" value="ACI46501.1"/>
    <property type="molecule type" value="mRNA"/>
</dbReference>
<dbReference type="RefSeq" id="NP_974701.1">
    <molecule id="B5X4Z4-1"/>
    <property type="nucleotide sequence ID" value="NM_202972.5"/>
</dbReference>
<dbReference type="SMR" id="B5X4Z4"/>
<dbReference type="BioGRID" id="15202">
    <property type="interactions" value="3"/>
</dbReference>
<dbReference type="FunCoup" id="B5X4Z4">
    <property type="interactions" value="270"/>
</dbReference>
<dbReference type="IntAct" id="B5X4Z4">
    <property type="interactions" value="3"/>
</dbReference>
<dbReference type="STRING" id="3702.B5X4Z4"/>
<dbReference type="PaxDb" id="3702-AT4G37670.2"/>
<dbReference type="ProteomicsDB" id="251020">
    <molecule id="B5X4Z4-1"/>
</dbReference>
<dbReference type="EnsemblPlants" id="AT4G37670.2">
    <molecule id="B5X4Z4-1"/>
    <property type="protein sequence ID" value="AT4G37670.2"/>
    <property type="gene ID" value="AT4G37670"/>
</dbReference>
<dbReference type="GeneID" id="829921"/>
<dbReference type="Gramene" id="AT4G37670.2">
    <molecule id="B5X4Z4-1"/>
    <property type="protein sequence ID" value="AT4G37670.2"/>
    <property type="gene ID" value="AT4G37670"/>
</dbReference>
<dbReference type="KEGG" id="ath:AT4G37670"/>
<dbReference type="Araport" id="AT4G37670"/>
<dbReference type="TAIR" id="AT4G37670">
    <property type="gene designation" value="NAGS2"/>
</dbReference>
<dbReference type="eggNOG" id="KOG2436">
    <property type="taxonomic scope" value="Eukaryota"/>
</dbReference>
<dbReference type="HOGENOM" id="CLU_024773_1_0_1"/>
<dbReference type="InParanoid" id="B5X4Z4"/>
<dbReference type="PhylomeDB" id="B5X4Z4"/>
<dbReference type="UniPathway" id="UPA00068">
    <property type="reaction ID" value="UER00106"/>
</dbReference>
<dbReference type="PRO" id="PR:B5X4Z4"/>
<dbReference type="Proteomes" id="UP000006548">
    <property type="component" value="Chromosome 4"/>
</dbReference>
<dbReference type="ExpressionAtlas" id="B5X4Z4">
    <property type="expression patterns" value="baseline and differential"/>
</dbReference>
<dbReference type="GO" id="GO:0009507">
    <property type="term" value="C:chloroplast"/>
    <property type="evidence" value="ECO:0007669"/>
    <property type="project" value="UniProtKB-SubCell"/>
</dbReference>
<dbReference type="GO" id="GO:0004042">
    <property type="term" value="F:L-glutamate N-acetyltransferase activity"/>
    <property type="evidence" value="ECO:0007669"/>
    <property type="project" value="InterPro"/>
</dbReference>
<dbReference type="GO" id="GO:0006526">
    <property type="term" value="P:L-arginine biosynthetic process"/>
    <property type="evidence" value="ECO:0007669"/>
    <property type="project" value="UniProtKB-UniPathway"/>
</dbReference>
<dbReference type="CDD" id="cd04237">
    <property type="entry name" value="AAK_NAGS-ABP"/>
    <property type="match status" value="1"/>
</dbReference>
<dbReference type="CDD" id="cd04301">
    <property type="entry name" value="NAT_SF"/>
    <property type="match status" value="1"/>
</dbReference>
<dbReference type="Gene3D" id="3.40.630.30">
    <property type="match status" value="1"/>
</dbReference>
<dbReference type="Gene3D" id="3.40.1160.10">
    <property type="entry name" value="Acetylglutamate kinase-like"/>
    <property type="match status" value="1"/>
</dbReference>
<dbReference type="HAMAP" id="MF_01105">
    <property type="entry name" value="N_acetyl_glu_synth"/>
    <property type="match status" value="1"/>
</dbReference>
<dbReference type="InterPro" id="IPR036393">
    <property type="entry name" value="AceGlu_kinase-like_sf"/>
</dbReference>
<dbReference type="InterPro" id="IPR016181">
    <property type="entry name" value="Acyl_CoA_acyltransferase"/>
</dbReference>
<dbReference type="InterPro" id="IPR001048">
    <property type="entry name" value="Asp/Glu/Uridylate_kinase"/>
</dbReference>
<dbReference type="InterPro" id="IPR000182">
    <property type="entry name" value="GNAT_dom"/>
</dbReference>
<dbReference type="InterPro" id="IPR033719">
    <property type="entry name" value="NAGS_kin"/>
</dbReference>
<dbReference type="InterPro" id="IPR010167">
    <property type="entry name" value="NH2A_AcTrfase"/>
</dbReference>
<dbReference type="NCBIfam" id="TIGR01890">
    <property type="entry name" value="N-Ac-Glu-synth"/>
    <property type="match status" value="1"/>
</dbReference>
<dbReference type="PANTHER" id="PTHR30602">
    <property type="entry name" value="AMINO-ACID ACETYLTRANSFERASE"/>
    <property type="match status" value="1"/>
</dbReference>
<dbReference type="PANTHER" id="PTHR30602:SF12">
    <property type="entry name" value="AMINO-ACID ACETYLTRANSFERASE NAGS1, CHLOROPLASTIC-RELATED"/>
    <property type="match status" value="1"/>
</dbReference>
<dbReference type="Pfam" id="PF00696">
    <property type="entry name" value="AA_kinase"/>
    <property type="match status" value="1"/>
</dbReference>
<dbReference type="Pfam" id="PF00583">
    <property type="entry name" value="Acetyltransf_1"/>
    <property type="match status" value="1"/>
</dbReference>
<dbReference type="SUPFAM" id="SSF55729">
    <property type="entry name" value="Acyl-CoA N-acyltransferases (Nat)"/>
    <property type="match status" value="1"/>
</dbReference>
<dbReference type="SUPFAM" id="SSF53633">
    <property type="entry name" value="Carbamate kinase-like"/>
    <property type="match status" value="2"/>
</dbReference>
<dbReference type="PROSITE" id="PS51186">
    <property type="entry name" value="GNAT"/>
    <property type="match status" value="1"/>
</dbReference>
<protein>
    <recommendedName>
        <fullName>Probable amino-acid acetyltransferase NAGS2, chloroplastic</fullName>
        <ecNumber>2.3.1.1</ecNumber>
    </recommendedName>
    <alternativeName>
        <fullName>N-acetylglutamate synthase 2</fullName>
    </alternativeName>
</protein>
<feature type="transit peptide" description="Chloroplast" evidence="2">
    <location>
        <begin position="1"/>
        <end position="74"/>
    </location>
</feature>
<feature type="chain" id="PRO_0000423407" description="Probable amino-acid acetyltransferase NAGS2, chloroplastic">
    <location>
        <begin position="75"/>
        <end position="613"/>
    </location>
</feature>
<feature type="domain" description="N-acetyltransferase">
    <location>
        <begin position="455"/>
        <end position="603"/>
    </location>
</feature>
<organism>
    <name type="scientific">Arabidopsis thaliana</name>
    <name type="common">Mouse-ear cress</name>
    <dbReference type="NCBI Taxonomy" id="3702"/>
    <lineage>
        <taxon>Eukaryota</taxon>
        <taxon>Viridiplantae</taxon>
        <taxon>Streptophyta</taxon>
        <taxon>Embryophyta</taxon>
        <taxon>Tracheophyta</taxon>
        <taxon>Spermatophyta</taxon>
        <taxon>Magnoliopsida</taxon>
        <taxon>eudicotyledons</taxon>
        <taxon>Gunneridae</taxon>
        <taxon>Pentapetalae</taxon>
        <taxon>rosids</taxon>
        <taxon>malvids</taxon>
        <taxon>Brassicales</taxon>
        <taxon>Brassicaceae</taxon>
        <taxon>Camelineae</taxon>
        <taxon>Arabidopsis</taxon>
    </lineage>
</organism>
<gene>
    <name type="primary">NAGS2</name>
    <name type="ordered locus">At4g37670</name>
    <name type="ORF">F19F18.160</name>
</gene>
<name>NAGS2_ARATH</name>
<evidence type="ECO:0000250" key="1"/>
<evidence type="ECO:0000255" key="2"/>
<evidence type="ECO:0000305" key="3"/>
<keyword id="KW-0012">Acyltransferase</keyword>
<keyword id="KW-0025">Alternative splicing</keyword>
<keyword id="KW-0028">Amino-acid biosynthesis</keyword>
<keyword id="KW-0055">Arginine biosynthesis</keyword>
<keyword id="KW-0150">Chloroplast</keyword>
<keyword id="KW-0934">Plastid</keyword>
<keyword id="KW-1185">Reference proteome</keyword>
<keyword id="KW-0808">Transferase</keyword>
<keyword id="KW-0809">Transit peptide</keyword>